<dbReference type="EC" id="4.2.3.4" evidence="1"/>
<dbReference type="EMBL" id="CP000733">
    <property type="protein sequence ID" value="ABS77505.1"/>
    <property type="molecule type" value="Genomic_DNA"/>
</dbReference>
<dbReference type="RefSeq" id="WP_011996422.1">
    <property type="nucleotide sequence ID" value="NC_009727.1"/>
</dbReference>
<dbReference type="SMR" id="A9KBB1"/>
<dbReference type="KEGG" id="cbd:CBUD_0125"/>
<dbReference type="HOGENOM" id="CLU_001201_0_2_6"/>
<dbReference type="UniPathway" id="UPA00053">
    <property type="reaction ID" value="UER00085"/>
</dbReference>
<dbReference type="Proteomes" id="UP000008555">
    <property type="component" value="Chromosome"/>
</dbReference>
<dbReference type="GO" id="GO:0005737">
    <property type="term" value="C:cytoplasm"/>
    <property type="evidence" value="ECO:0007669"/>
    <property type="project" value="UniProtKB-SubCell"/>
</dbReference>
<dbReference type="GO" id="GO:0003856">
    <property type="term" value="F:3-dehydroquinate synthase activity"/>
    <property type="evidence" value="ECO:0007669"/>
    <property type="project" value="UniProtKB-UniRule"/>
</dbReference>
<dbReference type="GO" id="GO:0046872">
    <property type="term" value="F:metal ion binding"/>
    <property type="evidence" value="ECO:0007669"/>
    <property type="project" value="UniProtKB-KW"/>
</dbReference>
<dbReference type="GO" id="GO:0000166">
    <property type="term" value="F:nucleotide binding"/>
    <property type="evidence" value="ECO:0007669"/>
    <property type="project" value="UniProtKB-KW"/>
</dbReference>
<dbReference type="GO" id="GO:0008652">
    <property type="term" value="P:amino acid biosynthetic process"/>
    <property type="evidence" value="ECO:0007669"/>
    <property type="project" value="UniProtKB-KW"/>
</dbReference>
<dbReference type="GO" id="GO:0009073">
    <property type="term" value="P:aromatic amino acid family biosynthetic process"/>
    <property type="evidence" value="ECO:0007669"/>
    <property type="project" value="UniProtKB-KW"/>
</dbReference>
<dbReference type="GO" id="GO:0009423">
    <property type="term" value="P:chorismate biosynthetic process"/>
    <property type="evidence" value="ECO:0007669"/>
    <property type="project" value="UniProtKB-UniRule"/>
</dbReference>
<dbReference type="CDD" id="cd08195">
    <property type="entry name" value="DHQS"/>
    <property type="match status" value="1"/>
</dbReference>
<dbReference type="FunFam" id="3.40.50.1970:FF:000001">
    <property type="entry name" value="3-dehydroquinate synthase"/>
    <property type="match status" value="1"/>
</dbReference>
<dbReference type="Gene3D" id="3.40.50.1970">
    <property type="match status" value="1"/>
</dbReference>
<dbReference type="Gene3D" id="1.20.1090.10">
    <property type="entry name" value="Dehydroquinate synthase-like - alpha domain"/>
    <property type="match status" value="1"/>
</dbReference>
<dbReference type="HAMAP" id="MF_00110">
    <property type="entry name" value="DHQ_synthase"/>
    <property type="match status" value="1"/>
</dbReference>
<dbReference type="InterPro" id="IPR050071">
    <property type="entry name" value="Dehydroquinate_synthase"/>
</dbReference>
<dbReference type="InterPro" id="IPR016037">
    <property type="entry name" value="DHQ_synth_AroB"/>
</dbReference>
<dbReference type="InterPro" id="IPR030963">
    <property type="entry name" value="DHQ_synth_fam"/>
</dbReference>
<dbReference type="InterPro" id="IPR030960">
    <property type="entry name" value="DHQS/DOIS_N"/>
</dbReference>
<dbReference type="InterPro" id="IPR056179">
    <property type="entry name" value="DHQS_C"/>
</dbReference>
<dbReference type="NCBIfam" id="TIGR01357">
    <property type="entry name" value="aroB"/>
    <property type="match status" value="1"/>
</dbReference>
<dbReference type="PANTHER" id="PTHR43622">
    <property type="entry name" value="3-DEHYDROQUINATE SYNTHASE"/>
    <property type="match status" value="1"/>
</dbReference>
<dbReference type="PANTHER" id="PTHR43622:SF7">
    <property type="entry name" value="3-DEHYDROQUINATE SYNTHASE, CHLOROPLASTIC"/>
    <property type="match status" value="1"/>
</dbReference>
<dbReference type="Pfam" id="PF01761">
    <property type="entry name" value="DHQ_synthase"/>
    <property type="match status" value="1"/>
</dbReference>
<dbReference type="Pfam" id="PF24621">
    <property type="entry name" value="DHQS_C"/>
    <property type="match status" value="1"/>
</dbReference>
<dbReference type="PIRSF" id="PIRSF001455">
    <property type="entry name" value="DHQ_synth"/>
    <property type="match status" value="1"/>
</dbReference>
<dbReference type="SUPFAM" id="SSF56796">
    <property type="entry name" value="Dehydroquinate synthase-like"/>
    <property type="match status" value="1"/>
</dbReference>
<proteinExistence type="inferred from homology"/>
<sequence length="359" mass="40346">MKTERVNVNVNNQPYPIYIGENLLQDKSLLQRHVKGRQVMIVSNETIAAFYLDPLKAIYQDFQCDTFILPDGEQYKTLEYWERILHKLACNHHRDTTLIALGGGVVGDITGFAAACYQRGVDFIQVPTTLLAQVDASIGGKTAVNHPVGKNLIGAFHQPKAVIIDLNTLNTLPEREFKAGMAEIVKAALIKDEKFFTDLENKMSDLLQRNFIFLQAVIKRAAEIKRDIVNADEKERSGERALLNLGHTFAHAIERLLGYGQWLHGEAVSAGLVLAAQLSHRKNLLDFESLQRICRLLTQISLPIHFPKSINADELLSAMYMDKKVANERLHLILLEDLGHAVVSDQVDDRELKSFLENG</sequence>
<evidence type="ECO:0000255" key="1">
    <source>
        <dbReference type="HAMAP-Rule" id="MF_00110"/>
    </source>
</evidence>
<feature type="chain" id="PRO_1000094498" description="3-dehydroquinate synthase">
    <location>
        <begin position="1"/>
        <end position="359"/>
    </location>
</feature>
<feature type="binding site" evidence="1">
    <location>
        <begin position="71"/>
        <end position="76"/>
    </location>
    <ligand>
        <name>NAD(+)</name>
        <dbReference type="ChEBI" id="CHEBI:57540"/>
    </ligand>
</feature>
<feature type="binding site" evidence="1">
    <location>
        <begin position="104"/>
        <end position="108"/>
    </location>
    <ligand>
        <name>NAD(+)</name>
        <dbReference type="ChEBI" id="CHEBI:57540"/>
    </ligand>
</feature>
<feature type="binding site" evidence="1">
    <location>
        <begin position="128"/>
        <end position="129"/>
    </location>
    <ligand>
        <name>NAD(+)</name>
        <dbReference type="ChEBI" id="CHEBI:57540"/>
    </ligand>
</feature>
<feature type="binding site" evidence="1">
    <location>
        <position position="141"/>
    </location>
    <ligand>
        <name>NAD(+)</name>
        <dbReference type="ChEBI" id="CHEBI:57540"/>
    </ligand>
</feature>
<feature type="binding site" evidence="1">
    <location>
        <position position="150"/>
    </location>
    <ligand>
        <name>NAD(+)</name>
        <dbReference type="ChEBI" id="CHEBI:57540"/>
    </ligand>
</feature>
<feature type="binding site" evidence="1">
    <location>
        <begin position="168"/>
        <end position="171"/>
    </location>
    <ligand>
        <name>NAD(+)</name>
        <dbReference type="ChEBI" id="CHEBI:57540"/>
    </ligand>
</feature>
<feature type="binding site" evidence="1">
    <location>
        <position position="183"/>
    </location>
    <ligand>
        <name>Zn(2+)</name>
        <dbReference type="ChEBI" id="CHEBI:29105"/>
    </ligand>
</feature>
<feature type="binding site" evidence="1">
    <location>
        <position position="247"/>
    </location>
    <ligand>
        <name>Zn(2+)</name>
        <dbReference type="ChEBI" id="CHEBI:29105"/>
    </ligand>
</feature>
<feature type="binding site" evidence="1">
    <location>
        <position position="264"/>
    </location>
    <ligand>
        <name>Zn(2+)</name>
        <dbReference type="ChEBI" id="CHEBI:29105"/>
    </ligand>
</feature>
<reference key="1">
    <citation type="journal article" date="2009" name="Infect. Immun.">
        <title>Comparative genomics reveal extensive transposon-mediated genomic plasticity and diversity among potential effector proteins within the genus Coxiella.</title>
        <authorList>
            <person name="Beare P.A."/>
            <person name="Unsworth N."/>
            <person name="Andoh M."/>
            <person name="Voth D.E."/>
            <person name="Omsland A."/>
            <person name="Gilk S.D."/>
            <person name="Williams K.P."/>
            <person name="Sobral B.W."/>
            <person name="Kupko J.J. III"/>
            <person name="Porcella S.F."/>
            <person name="Samuel J.E."/>
            <person name="Heinzen R.A."/>
        </authorList>
    </citation>
    <scope>NUCLEOTIDE SEQUENCE [LARGE SCALE GENOMIC DNA]</scope>
    <source>
        <strain>Dugway 5J108-111</strain>
    </source>
</reference>
<keyword id="KW-0028">Amino-acid biosynthesis</keyword>
<keyword id="KW-0057">Aromatic amino acid biosynthesis</keyword>
<keyword id="KW-0170">Cobalt</keyword>
<keyword id="KW-0963">Cytoplasm</keyword>
<keyword id="KW-0456">Lyase</keyword>
<keyword id="KW-0479">Metal-binding</keyword>
<keyword id="KW-0520">NAD</keyword>
<keyword id="KW-0547">Nucleotide-binding</keyword>
<keyword id="KW-0862">Zinc</keyword>
<protein>
    <recommendedName>
        <fullName evidence="1">3-dehydroquinate synthase</fullName>
        <shortName evidence="1">DHQS</shortName>
        <ecNumber evidence="1">4.2.3.4</ecNumber>
    </recommendedName>
</protein>
<name>AROB_COXBN</name>
<accession>A9KBB1</accession>
<gene>
    <name evidence="1" type="primary">aroB</name>
    <name type="ordered locus">CBUD_0125</name>
</gene>
<comment type="function">
    <text evidence="1">Catalyzes the conversion of 3-deoxy-D-arabino-heptulosonate 7-phosphate (DAHP) to dehydroquinate (DHQ).</text>
</comment>
<comment type="catalytic activity">
    <reaction evidence="1">
        <text>7-phospho-2-dehydro-3-deoxy-D-arabino-heptonate = 3-dehydroquinate + phosphate</text>
        <dbReference type="Rhea" id="RHEA:21968"/>
        <dbReference type="ChEBI" id="CHEBI:32364"/>
        <dbReference type="ChEBI" id="CHEBI:43474"/>
        <dbReference type="ChEBI" id="CHEBI:58394"/>
        <dbReference type="EC" id="4.2.3.4"/>
    </reaction>
</comment>
<comment type="cofactor">
    <cofactor evidence="1">
        <name>Co(2+)</name>
        <dbReference type="ChEBI" id="CHEBI:48828"/>
    </cofactor>
    <cofactor evidence="1">
        <name>Zn(2+)</name>
        <dbReference type="ChEBI" id="CHEBI:29105"/>
    </cofactor>
    <text evidence="1">Binds 1 divalent metal cation per subunit. Can use either Co(2+) or Zn(2+).</text>
</comment>
<comment type="cofactor">
    <cofactor evidence="1">
        <name>NAD(+)</name>
        <dbReference type="ChEBI" id="CHEBI:57540"/>
    </cofactor>
</comment>
<comment type="pathway">
    <text evidence="1">Metabolic intermediate biosynthesis; chorismate biosynthesis; chorismate from D-erythrose 4-phosphate and phosphoenolpyruvate: step 2/7.</text>
</comment>
<comment type="subcellular location">
    <subcellularLocation>
        <location evidence="1">Cytoplasm</location>
    </subcellularLocation>
</comment>
<comment type="similarity">
    <text evidence="1">Belongs to the sugar phosphate cyclases superfamily. Dehydroquinate synthase family.</text>
</comment>
<organism>
    <name type="scientific">Coxiella burnetii (strain Dugway 5J108-111)</name>
    <dbReference type="NCBI Taxonomy" id="434922"/>
    <lineage>
        <taxon>Bacteria</taxon>
        <taxon>Pseudomonadati</taxon>
        <taxon>Pseudomonadota</taxon>
        <taxon>Gammaproteobacteria</taxon>
        <taxon>Legionellales</taxon>
        <taxon>Coxiellaceae</taxon>
        <taxon>Coxiella</taxon>
    </lineage>
</organism>